<keyword id="KW-0004">4Fe-4S</keyword>
<keyword id="KW-0408">Iron</keyword>
<keyword id="KW-0411">Iron-sulfur</keyword>
<keyword id="KW-0479">Metal-binding</keyword>
<keyword id="KW-0489">Methyltransferase</keyword>
<keyword id="KW-1185">Reference proteome</keyword>
<keyword id="KW-0698">rRNA processing</keyword>
<keyword id="KW-0949">S-adenosyl-L-methionine</keyword>
<keyword id="KW-0808">Transferase</keyword>
<comment type="function">
    <text evidence="1">Catalyzes the formation of 5-methyl-uridine at position 1939 (m5U1939) in 23S rRNA.</text>
</comment>
<comment type="catalytic activity">
    <reaction evidence="1">
        <text>uridine(1939) in 23S rRNA + S-adenosyl-L-methionine = 5-methyluridine(1939) in 23S rRNA + S-adenosyl-L-homocysteine + H(+)</text>
        <dbReference type="Rhea" id="RHEA:42908"/>
        <dbReference type="Rhea" id="RHEA-COMP:10278"/>
        <dbReference type="Rhea" id="RHEA-COMP:10279"/>
        <dbReference type="ChEBI" id="CHEBI:15378"/>
        <dbReference type="ChEBI" id="CHEBI:57856"/>
        <dbReference type="ChEBI" id="CHEBI:59789"/>
        <dbReference type="ChEBI" id="CHEBI:65315"/>
        <dbReference type="ChEBI" id="CHEBI:74447"/>
        <dbReference type="EC" id="2.1.1.190"/>
    </reaction>
</comment>
<comment type="similarity">
    <text evidence="1">Belongs to the class I-like SAM-binding methyltransferase superfamily. RNA M5U methyltransferase family. RlmD subfamily.</text>
</comment>
<feature type="chain" id="PRO_0000161897" description="23S rRNA (uracil(1939)-C(5))-methyltransferase RlmD">
    <location>
        <begin position="1"/>
        <end position="442"/>
    </location>
</feature>
<feature type="domain" description="TRAM" evidence="1">
    <location>
        <begin position="10"/>
        <end position="75"/>
    </location>
</feature>
<feature type="active site" description="Nucleophile" evidence="1">
    <location>
        <position position="400"/>
    </location>
</feature>
<feature type="binding site" evidence="1">
    <location>
        <position position="88"/>
    </location>
    <ligand>
        <name>[4Fe-4S] cluster</name>
        <dbReference type="ChEBI" id="CHEBI:49883"/>
    </ligand>
</feature>
<feature type="binding site" evidence="1">
    <location>
        <position position="94"/>
    </location>
    <ligand>
        <name>[4Fe-4S] cluster</name>
        <dbReference type="ChEBI" id="CHEBI:49883"/>
    </ligand>
</feature>
<feature type="binding site" evidence="1">
    <location>
        <position position="97"/>
    </location>
    <ligand>
        <name>[4Fe-4S] cluster</name>
        <dbReference type="ChEBI" id="CHEBI:49883"/>
    </ligand>
</feature>
<feature type="binding site" evidence="1">
    <location>
        <position position="173"/>
    </location>
    <ligand>
        <name>[4Fe-4S] cluster</name>
        <dbReference type="ChEBI" id="CHEBI:49883"/>
    </ligand>
</feature>
<feature type="binding site" evidence="1">
    <location>
        <position position="276"/>
    </location>
    <ligand>
        <name>S-adenosyl-L-methionine</name>
        <dbReference type="ChEBI" id="CHEBI:59789"/>
    </ligand>
</feature>
<feature type="binding site" evidence="1">
    <location>
        <position position="305"/>
    </location>
    <ligand>
        <name>S-adenosyl-L-methionine</name>
        <dbReference type="ChEBI" id="CHEBI:59789"/>
    </ligand>
</feature>
<feature type="binding site" evidence="1">
    <location>
        <position position="310"/>
    </location>
    <ligand>
        <name>S-adenosyl-L-methionine</name>
        <dbReference type="ChEBI" id="CHEBI:59789"/>
    </ligand>
</feature>
<feature type="binding site" evidence="1">
    <location>
        <position position="326"/>
    </location>
    <ligand>
        <name>S-adenosyl-L-methionine</name>
        <dbReference type="ChEBI" id="CHEBI:59789"/>
    </ligand>
</feature>
<feature type="binding site" evidence="1">
    <location>
        <position position="353"/>
    </location>
    <ligand>
        <name>S-adenosyl-L-methionine</name>
        <dbReference type="ChEBI" id="CHEBI:59789"/>
    </ligand>
</feature>
<feature type="binding site" evidence="1">
    <location>
        <position position="374"/>
    </location>
    <ligand>
        <name>S-adenosyl-L-methionine</name>
        <dbReference type="ChEBI" id="CHEBI:59789"/>
    </ligand>
</feature>
<dbReference type="EC" id="2.1.1.190" evidence="1"/>
<dbReference type="EMBL" id="AE017143">
    <property type="protein sequence ID" value="AAP96519.1"/>
    <property type="molecule type" value="Genomic_DNA"/>
</dbReference>
<dbReference type="RefSeq" id="WP_010945548.1">
    <property type="nucleotide sequence ID" value="NC_002940.2"/>
</dbReference>
<dbReference type="SMR" id="Q7VKU9"/>
<dbReference type="STRING" id="233412.HD_1765"/>
<dbReference type="KEGG" id="hdu:HD_1765"/>
<dbReference type="eggNOG" id="COG2265">
    <property type="taxonomic scope" value="Bacteria"/>
</dbReference>
<dbReference type="HOGENOM" id="CLU_014689_8_2_6"/>
<dbReference type="OrthoDB" id="9804590at2"/>
<dbReference type="Proteomes" id="UP000001022">
    <property type="component" value="Chromosome"/>
</dbReference>
<dbReference type="GO" id="GO:0051539">
    <property type="term" value="F:4 iron, 4 sulfur cluster binding"/>
    <property type="evidence" value="ECO:0007669"/>
    <property type="project" value="UniProtKB-KW"/>
</dbReference>
<dbReference type="GO" id="GO:0005506">
    <property type="term" value="F:iron ion binding"/>
    <property type="evidence" value="ECO:0007669"/>
    <property type="project" value="UniProtKB-UniRule"/>
</dbReference>
<dbReference type="GO" id="GO:0003723">
    <property type="term" value="F:RNA binding"/>
    <property type="evidence" value="ECO:0007669"/>
    <property type="project" value="InterPro"/>
</dbReference>
<dbReference type="GO" id="GO:0070041">
    <property type="term" value="F:rRNA (uridine-C5-)-methyltransferase activity"/>
    <property type="evidence" value="ECO:0007669"/>
    <property type="project" value="UniProtKB-UniRule"/>
</dbReference>
<dbReference type="GO" id="GO:0070475">
    <property type="term" value="P:rRNA base methylation"/>
    <property type="evidence" value="ECO:0007669"/>
    <property type="project" value="TreeGrafter"/>
</dbReference>
<dbReference type="CDD" id="cd02440">
    <property type="entry name" value="AdoMet_MTases"/>
    <property type="match status" value="1"/>
</dbReference>
<dbReference type="FunFam" id="3.40.50.150:FF:000009">
    <property type="entry name" value="23S rRNA (Uracil(1939)-C(5))-methyltransferase RlmD"/>
    <property type="match status" value="1"/>
</dbReference>
<dbReference type="Gene3D" id="2.40.50.1070">
    <property type="match status" value="1"/>
</dbReference>
<dbReference type="Gene3D" id="2.40.50.140">
    <property type="entry name" value="Nucleic acid-binding proteins"/>
    <property type="match status" value="1"/>
</dbReference>
<dbReference type="Gene3D" id="3.40.50.150">
    <property type="entry name" value="Vaccinia Virus protein VP39"/>
    <property type="match status" value="1"/>
</dbReference>
<dbReference type="HAMAP" id="MF_01010">
    <property type="entry name" value="23SrRNA_methyltr_RlmD"/>
    <property type="match status" value="1"/>
</dbReference>
<dbReference type="InterPro" id="IPR001566">
    <property type="entry name" value="23S_rRNA_MeTrfase_RlmD"/>
</dbReference>
<dbReference type="InterPro" id="IPR030390">
    <property type="entry name" value="MeTrfase_TrmA_AS"/>
</dbReference>
<dbReference type="InterPro" id="IPR030391">
    <property type="entry name" value="MeTrfase_TrmA_CS"/>
</dbReference>
<dbReference type="InterPro" id="IPR012340">
    <property type="entry name" value="NA-bd_OB-fold"/>
</dbReference>
<dbReference type="InterPro" id="IPR029063">
    <property type="entry name" value="SAM-dependent_MTases_sf"/>
</dbReference>
<dbReference type="InterPro" id="IPR002792">
    <property type="entry name" value="TRAM_dom"/>
</dbReference>
<dbReference type="InterPro" id="IPR010280">
    <property type="entry name" value="U5_MeTrfase_fam"/>
</dbReference>
<dbReference type="NCBIfam" id="NF009639">
    <property type="entry name" value="PRK13168.1"/>
    <property type="match status" value="1"/>
</dbReference>
<dbReference type="NCBIfam" id="TIGR00479">
    <property type="entry name" value="rumA"/>
    <property type="match status" value="1"/>
</dbReference>
<dbReference type="PANTHER" id="PTHR11061:SF49">
    <property type="entry name" value="23S RRNA (URACIL(1939)-C(5))-METHYLTRANSFERASE RLMD"/>
    <property type="match status" value="1"/>
</dbReference>
<dbReference type="PANTHER" id="PTHR11061">
    <property type="entry name" value="RNA M5U METHYLTRANSFERASE"/>
    <property type="match status" value="1"/>
</dbReference>
<dbReference type="Pfam" id="PF01938">
    <property type="entry name" value="TRAM"/>
    <property type="match status" value="1"/>
</dbReference>
<dbReference type="Pfam" id="PF05958">
    <property type="entry name" value="tRNA_U5-meth_tr"/>
    <property type="match status" value="1"/>
</dbReference>
<dbReference type="SUPFAM" id="SSF50249">
    <property type="entry name" value="Nucleic acid-binding proteins"/>
    <property type="match status" value="1"/>
</dbReference>
<dbReference type="SUPFAM" id="SSF53335">
    <property type="entry name" value="S-adenosyl-L-methionine-dependent methyltransferases"/>
    <property type="match status" value="1"/>
</dbReference>
<dbReference type="PROSITE" id="PS51687">
    <property type="entry name" value="SAM_MT_RNA_M5U"/>
    <property type="match status" value="1"/>
</dbReference>
<dbReference type="PROSITE" id="PS01230">
    <property type="entry name" value="TRMA_1"/>
    <property type="match status" value="1"/>
</dbReference>
<dbReference type="PROSITE" id="PS01231">
    <property type="entry name" value="TRMA_2"/>
    <property type="match status" value="1"/>
</dbReference>
<name>RLMD_HAEDU</name>
<accession>Q7VKU9</accession>
<organism>
    <name type="scientific">Haemophilus ducreyi (strain 35000HP / ATCC 700724)</name>
    <dbReference type="NCBI Taxonomy" id="233412"/>
    <lineage>
        <taxon>Bacteria</taxon>
        <taxon>Pseudomonadati</taxon>
        <taxon>Pseudomonadota</taxon>
        <taxon>Gammaproteobacteria</taxon>
        <taxon>Pasteurellales</taxon>
        <taxon>Pasteurellaceae</taxon>
        <taxon>Haemophilus</taxon>
    </lineage>
</organism>
<protein>
    <recommendedName>
        <fullName evidence="1">23S rRNA (uracil(1939)-C(5))-methyltransferase RlmD</fullName>
        <ecNumber evidence="1">2.1.1.190</ecNumber>
    </recommendedName>
    <alternativeName>
        <fullName evidence="1">23S rRNA(m5U1939)-methyltransferase</fullName>
    </alternativeName>
</protein>
<reference key="1">
    <citation type="submission" date="2003-06" db="EMBL/GenBank/DDBJ databases">
        <title>The complete genome sequence of Haemophilus ducreyi.</title>
        <authorList>
            <person name="Munson R.S. Jr."/>
            <person name="Ray W.C."/>
            <person name="Mahairas G."/>
            <person name="Sabo P."/>
            <person name="Mungur R."/>
            <person name="Johnson L."/>
            <person name="Nguyen D."/>
            <person name="Wang J."/>
            <person name="Forst C."/>
            <person name="Hood L."/>
        </authorList>
    </citation>
    <scope>NUCLEOTIDE SEQUENCE [LARGE SCALE GENOMIC DNA]</scope>
    <source>
        <strain>35000HP / ATCC 700724</strain>
    </source>
</reference>
<gene>
    <name evidence="1" type="primary">rlmD</name>
    <name type="synonym">rumA</name>
    <name type="ordered locus">HD_1765</name>
</gene>
<proteinExistence type="inferred from homology"/>
<evidence type="ECO:0000255" key="1">
    <source>
        <dbReference type="HAMAP-Rule" id="MF_01010"/>
    </source>
</evidence>
<sequence length="442" mass="50514">MAIFYSEKTAKQTAKNCCKTTARQIVNIHSLDYQGLDVAKINGKTWFIENALPNEQVLIHVIEEKRQYGRAKANKILQASPLRQQPSCISYPQCGGCQMQHIKLDVQRQTKQQAFFKQLQRLQTEPIDWQPMISGQDKHYRRRTKLSMAIQRNQLVIGFRQQNTHQIIPLTDCEVLEQPLSTLLPKLQHLFAGWKMKKALGHIELVNADNTRAMLVLHIGKINAQDQHMLLNFAKAEQLSLYLMCDENHIEHLCGEAPYYQINGLTLHFCIRDFIQVNQPLNQKMVNKALEWLAITAEDRILDLFCGIGNFSLPIAQQAGFVVGVEGVEEMVKQAKINQQTSGLNNIAFYQTNLAESFVDQHWATQPFNKVLLDPARQGALFCLDHLMALTPERIIYISCNPATLMRDAEKLIRHGYKIAKSAVIDMFPHTGHLESISMFIK</sequence>